<organism>
    <name type="scientific">Methanosarcina acetivorans (strain ATCC 35395 / DSM 2834 / JCM 12185 / C2A)</name>
    <dbReference type="NCBI Taxonomy" id="188937"/>
    <lineage>
        <taxon>Archaea</taxon>
        <taxon>Methanobacteriati</taxon>
        <taxon>Methanobacteriota</taxon>
        <taxon>Stenosarchaea group</taxon>
        <taxon>Methanomicrobia</taxon>
        <taxon>Methanosarcinales</taxon>
        <taxon>Methanosarcinaceae</taxon>
        <taxon>Methanosarcina</taxon>
    </lineage>
</organism>
<reference key="1">
    <citation type="journal article" date="2002" name="Genome Res.">
        <title>The genome of Methanosarcina acetivorans reveals extensive metabolic and physiological diversity.</title>
        <authorList>
            <person name="Galagan J.E."/>
            <person name="Nusbaum C."/>
            <person name="Roy A."/>
            <person name="Endrizzi M.G."/>
            <person name="Macdonald P."/>
            <person name="FitzHugh W."/>
            <person name="Calvo S."/>
            <person name="Engels R."/>
            <person name="Smirnov S."/>
            <person name="Atnoor D."/>
            <person name="Brown A."/>
            <person name="Allen N."/>
            <person name="Naylor J."/>
            <person name="Stange-Thomann N."/>
            <person name="DeArellano K."/>
            <person name="Johnson R."/>
            <person name="Linton L."/>
            <person name="McEwan P."/>
            <person name="McKernan K."/>
            <person name="Talamas J."/>
            <person name="Tirrell A."/>
            <person name="Ye W."/>
            <person name="Zimmer A."/>
            <person name="Barber R.D."/>
            <person name="Cann I."/>
            <person name="Graham D.E."/>
            <person name="Grahame D.A."/>
            <person name="Guss A.M."/>
            <person name="Hedderich R."/>
            <person name="Ingram-Smith C."/>
            <person name="Kuettner H.C."/>
            <person name="Krzycki J.A."/>
            <person name="Leigh J.A."/>
            <person name="Li W."/>
            <person name="Liu J."/>
            <person name="Mukhopadhyay B."/>
            <person name="Reeve J.N."/>
            <person name="Smith K."/>
            <person name="Springer T.A."/>
            <person name="Umayam L.A."/>
            <person name="White O."/>
            <person name="White R.H."/>
            <person name="de Macario E.C."/>
            <person name="Ferry J.G."/>
            <person name="Jarrell K.F."/>
            <person name="Jing H."/>
            <person name="Macario A.J.L."/>
            <person name="Paulsen I.T."/>
            <person name="Pritchett M."/>
            <person name="Sowers K.R."/>
            <person name="Swanson R.V."/>
            <person name="Zinder S.H."/>
            <person name="Lander E."/>
            <person name="Metcalf W.W."/>
            <person name="Birren B."/>
        </authorList>
    </citation>
    <scope>NUCLEOTIDE SEQUENCE [LARGE SCALE GENOMIC DNA]</scope>
    <source>
        <strain>ATCC 35395 / DSM 2834 / JCM 12185 / C2A</strain>
    </source>
</reference>
<keyword id="KW-0028">Amino-acid biosynthesis</keyword>
<keyword id="KW-0100">Branched-chain amino acid biosynthesis</keyword>
<keyword id="KW-0432">Leucine biosynthesis</keyword>
<keyword id="KW-0456">Lyase</keyword>
<keyword id="KW-1185">Reference proteome</keyword>
<dbReference type="EC" id="4.2.1.33"/>
<dbReference type="EMBL" id="AE010299">
    <property type="protein sequence ID" value="AAM03655.1"/>
    <property type="molecule type" value="Genomic_DNA"/>
</dbReference>
<dbReference type="RefSeq" id="WP_011020260.1">
    <property type="nucleotide sequence ID" value="NC_003552.1"/>
</dbReference>
<dbReference type="SMR" id="Q8TU71"/>
<dbReference type="FunCoup" id="Q8TU71">
    <property type="interactions" value="82"/>
</dbReference>
<dbReference type="STRING" id="188937.MA_0202"/>
<dbReference type="EnsemblBacteria" id="AAM03655">
    <property type="protein sequence ID" value="AAM03655"/>
    <property type="gene ID" value="MA_0202"/>
</dbReference>
<dbReference type="GeneID" id="1472094"/>
<dbReference type="KEGG" id="mac:MA_0202"/>
<dbReference type="HOGENOM" id="CLU_081378_1_1_2"/>
<dbReference type="InParanoid" id="Q8TU71"/>
<dbReference type="OrthoDB" id="6505at2157"/>
<dbReference type="PhylomeDB" id="Q8TU71"/>
<dbReference type="UniPathway" id="UPA00048">
    <property type="reaction ID" value="UER00071"/>
</dbReference>
<dbReference type="Proteomes" id="UP000002487">
    <property type="component" value="Chromosome"/>
</dbReference>
<dbReference type="GO" id="GO:0003861">
    <property type="term" value="F:3-isopropylmalate dehydratase activity"/>
    <property type="evidence" value="ECO:0007669"/>
    <property type="project" value="UniProtKB-UniRule"/>
</dbReference>
<dbReference type="GO" id="GO:0009098">
    <property type="term" value="P:L-leucine biosynthetic process"/>
    <property type="evidence" value="ECO:0007669"/>
    <property type="project" value="UniProtKB-UniRule"/>
</dbReference>
<dbReference type="CDD" id="cd01577">
    <property type="entry name" value="IPMI_Swivel"/>
    <property type="match status" value="1"/>
</dbReference>
<dbReference type="FunFam" id="3.20.19.10:FF:000007">
    <property type="entry name" value="Isopropylmalate/citramalate isomerase small subunit"/>
    <property type="match status" value="1"/>
</dbReference>
<dbReference type="Gene3D" id="3.20.19.10">
    <property type="entry name" value="Aconitase, domain 4"/>
    <property type="match status" value="1"/>
</dbReference>
<dbReference type="HAMAP" id="MF_01032">
    <property type="entry name" value="LeuD_type2"/>
    <property type="match status" value="1"/>
</dbReference>
<dbReference type="InterPro" id="IPR015928">
    <property type="entry name" value="Aconitase/3IPM_dehydase_swvl"/>
</dbReference>
<dbReference type="InterPro" id="IPR000573">
    <property type="entry name" value="AconitaseA/IPMdHydase_ssu_swvl"/>
</dbReference>
<dbReference type="InterPro" id="IPR033940">
    <property type="entry name" value="IPMI_Swivel"/>
</dbReference>
<dbReference type="InterPro" id="IPR050075">
    <property type="entry name" value="LeuD"/>
</dbReference>
<dbReference type="InterPro" id="IPR011827">
    <property type="entry name" value="LeuD_type2/HacB/DmdB"/>
</dbReference>
<dbReference type="NCBIfam" id="TIGR02087">
    <property type="entry name" value="LEUD_arch"/>
    <property type="match status" value="1"/>
</dbReference>
<dbReference type="PANTHER" id="PTHR43345:SF9">
    <property type="entry name" value="3-ISOPROPYLMALATE DEHYDRATASE SMALL SUBUNIT"/>
    <property type="match status" value="1"/>
</dbReference>
<dbReference type="PANTHER" id="PTHR43345">
    <property type="entry name" value="3-ISOPROPYLMALATE DEHYDRATASE SMALL SUBUNIT 2-RELATED-RELATED"/>
    <property type="match status" value="1"/>
</dbReference>
<dbReference type="Pfam" id="PF00694">
    <property type="entry name" value="Aconitase_C"/>
    <property type="match status" value="1"/>
</dbReference>
<dbReference type="SUPFAM" id="SSF52016">
    <property type="entry name" value="LeuD/IlvD-like"/>
    <property type="match status" value="1"/>
</dbReference>
<accession>Q8TU71</accession>
<sequence>MEGRAWKFGDDVDTDAVIPGRYLIFNTPGELAKYTFEGVRPDFAKKVHENDIVVAGSNFGCGSSREHAPLALKGSKVSCVIAKSFARIFFRNAINIGVPVLECPNTDRIDDGDELEVDLSTGDIQNITKGETYQATPLPDFVREIVDEGGLIEYARKLVSER</sequence>
<protein>
    <recommendedName>
        <fullName>3-isopropylmalate dehydratase small subunit</fullName>
        <ecNumber>4.2.1.33</ecNumber>
    </recommendedName>
    <alternativeName>
        <fullName>Alpha-IPM isomerase</fullName>
        <shortName>IPMI</shortName>
    </alternativeName>
    <alternativeName>
        <fullName>Isopropylmalate isomerase</fullName>
    </alternativeName>
</protein>
<gene>
    <name type="primary">leuD</name>
    <name type="ordered locus">MA_0202</name>
</gene>
<comment type="function">
    <text evidence="1">Catalyzes the isomerization between 2-isopropylmalate and 3-isopropylmalate, via the formation of 2-isopropylmaleate.</text>
</comment>
<comment type="catalytic activity">
    <reaction>
        <text>(2R,3S)-3-isopropylmalate = (2S)-2-isopropylmalate</text>
        <dbReference type="Rhea" id="RHEA:32287"/>
        <dbReference type="ChEBI" id="CHEBI:1178"/>
        <dbReference type="ChEBI" id="CHEBI:35121"/>
        <dbReference type="EC" id="4.2.1.33"/>
    </reaction>
</comment>
<comment type="pathway">
    <text>Amino-acid biosynthesis; L-leucine biosynthesis; L-leucine from 3-methyl-2-oxobutanoate: step 2/4.</text>
</comment>
<comment type="subunit">
    <text evidence="1">Heterodimer of LeuC and LeuD.</text>
</comment>
<comment type="similarity">
    <text evidence="2">Belongs to the LeuD family. LeuD type 2 subfamily.</text>
</comment>
<feature type="chain" id="PRO_0000141934" description="3-isopropylmalate dehydratase small subunit">
    <location>
        <begin position="1"/>
        <end position="162"/>
    </location>
</feature>
<evidence type="ECO:0000250" key="1"/>
<evidence type="ECO:0000305" key="2"/>
<name>LEUD_METAC</name>
<proteinExistence type="inferred from homology"/>